<proteinExistence type="inferred from homology"/>
<organism>
    <name type="scientific">Escherichia coli (strain K12 / MC4100 / BW2952)</name>
    <dbReference type="NCBI Taxonomy" id="595496"/>
    <lineage>
        <taxon>Bacteria</taxon>
        <taxon>Pseudomonadati</taxon>
        <taxon>Pseudomonadota</taxon>
        <taxon>Gammaproteobacteria</taxon>
        <taxon>Enterobacterales</taxon>
        <taxon>Enterobacteriaceae</taxon>
        <taxon>Escherichia</taxon>
    </lineage>
</organism>
<comment type="catalytic activity">
    <reaction evidence="1">
        <text>L-methionyl-[protein] + [thioredoxin]-disulfide + H2O = L-methionyl-(R)-S-oxide-[protein] + [thioredoxin]-dithiol</text>
        <dbReference type="Rhea" id="RHEA:24164"/>
        <dbReference type="Rhea" id="RHEA-COMP:10698"/>
        <dbReference type="Rhea" id="RHEA-COMP:10700"/>
        <dbReference type="Rhea" id="RHEA-COMP:12313"/>
        <dbReference type="Rhea" id="RHEA-COMP:12314"/>
        <dbReference type="ChEBI" id="CHEBI:15377"/>
        <dbReference type="ChEBI" id="CHEBI:16044"/>
        <dbReference type="ChEBI" id="CHEBI:29950"/>
        <dbReference type="ChEBI" id="CHEBI:45764"/>
        <dbReference type="ChEBI" id="CHEBI:50058"/>
        <dbReference type="EC" id="1.8.4.12"/>
    </reaction>
</comment>
<comment type="cofactor">
    <cofactor evidence="1">
        <name>Zn(2+)</name>
        <dbReference type="ChEBI" id="CHEBI:29105"/>
    </cofactor>
    <text evidence="1">Binds 1 zinc ion per subunit. The zinc ion is important for the structural integrity of the protein.</text>
</comment>
<comment type="similarity">
    <text evidence="1">Belongs to the MsrB Met sulfoxide reductase family.</text>
</comment>
<feature type="chain" id="PRO_1000215172" description="Peptide methionine sulfoxide reductase MsrB">
    <location>
        <begin position="1"/>
        <end position="137"/>
    </location>
</feature>
<feature type="domain" description="MsrB" evidence="2">
    <location>
        <begin position="7"/>
        <end position="129"/>
    </location>
</feature>
<feature type="active site" description="Nucleophile" evidence="2">
    <location>
        <position position="118"/>
    </location>
</feature>
<feature type="binding site" evidence="2">
    <location>
        <position position="46"/>
    </location>
    <ligand>
        <name>Zn(2+)</name>
        <dbReference type="ChEBI" id="CHEBI:29105"/>
    </ligand>
</feature>
<feature type="binding site" evidence="2">
    <location>
        <position position="49"/>
    </location>
    <ligand>
        <name>Zn(2+)</name>
        <dbReference type="ChEBI" id="CHEBI:29105"/>
    </ligand>
</feature>
<feature type="binding site" evidence="2">
    <location>
        <position position="95"/>
    </location>
    <ligand>
        <name>Zn(2+)</name>
        <dbReference type="ChEBI" id="CHEBI:29105"/>
    </ligand>
</feature>
<feature type="binding site" evidence="2">
    <location>
        <position position="98"/>
    </location>
    <ligand>
        <name>Zn(2+)</name>
        <dbReference type="ChEBI" id="CHEBI:29105"/>
    </ligand>
</feature>
<protein>
    <recommendedName>
        <fullName evidence="1">Peptide methionine sulfoxide reductase MsrB</fullName>
        <ecNumber evidence="1">1.8.4.12</ecNumber>
    </recommendedName>
    <alternativeName>
        <fullName evidence="1">Peptide-methionine (R)-S-oxide reductase</fullName>
    </alternativeName>
</protein>
<keyword id="KW-0479">Metal-binding</keyword>
<keyword id="KW-0560">Oxidoreductase</keyword>
<keyword id="KW-0862">Zinc</keyword>
<gene>
    <name evidence="1" type="primary">msrB</name>
    <name type="ordered locus">BWG_1591</name>
</gene>
<sequence>MANKPSAEELKKNLSEMQFYVTQNHGTEPPFTGRLLHNKRDGVYHCLICDAPLFHSQTKYDSGCGWPSFYEPVSEESIRYIKDLSHGMQRIEIRCGNCDAHLGHVFPDGPQPTGERYCVNSASLRFTDGENGEEING</sequence>
<evidence type="ECO:0000255" key="1">
    <source>
        <dbReference type="HAMAP-Rule" id="MF_01400"/>
    </source>
</evidence>
<evidence type="ECO:0000255" key="2">
    <source>
        <dbReference type="PROSITE-ProRule" id="PRU01126"/>
    </source>
</evidence>
<dbReference type="EC" id="1.8.4.12" evidence="1"/>
<dbReference type="EMBL" id="CP001396">
    <property type="protein sequence ID" value="ACR63755.1"/>
    <property type="molecule type" value="Genomic_DNA"/>
</dbReference>
<dbReference type="RefSeq" id="WP_001284618.1">
    <property type="nucleotide sequence ID" value="NC_012759.1"/>
</dbReference>
<dbReference type="SMR" id="C4ZZD4"/>
<dbReference type="GeneID" id="93775987"/>
<dbReference type="KEGG" id="ebw:BWG_1591"/>
<dbReference type="HOGENOM" id="CLU_031040_8_5_6"/>
<dbReference type="GO" id="GO:0005737">
    <property type="term" value="C:cytoplasm"/>
    <property type="evidence" value="ECO:0007669"/>
    <property type="project" value="TreeGrafter"/>
</dbReference>
<dbReference type="GO" id="GO:0033743">
    <property type="term" value="F:peptide-methionine (R)-S-oxide reductase activity"/>
    <property type="evidence" value="ECO:0007669"/>
    <property type="project" value="UniProtKB-UniRule"/>
</dbReference>
<dbReference type="GO" id="GO:0008270">
    <property type="term" value="F:zinc ion binding"/>
    <property type="evidence" value="ECO:0007669"/>
    <property type="project" value="UniProtKB-UniRule"/>
</dbReference>
<dbReference type="GO" id="GO:0030091">
    <property type="term" value="P:protein repair"/>
    <property type="evidence" value="ECO:0007669"/>
    <property type="project" value="InterPro"/>
</dbReference>
<dbReference type="GO" id="GO:0006979">
    <property type="term" value="P:response to oxidative stress"/>
    <property type="evidence" value="ECO:0007669"/>
    <property type="project" value="InterPro"/>
</dbReference>
<dbReference type="FunFam" id="2.170.150.20:FF:000001">
    <property type="entry name" value="Peptide methionine sulfoxide reductase MsrB"/>
    <property type="match status" value="1"/>
</dbReference>
<dbReference type="Gene3D" id="2.170.150.20">
    <property type="entry name" value="Peptide methionine sulfoxide reductase"/>
    <property type="match status" value="1"/>
</dbReference>
<dbReference type="HAMAP" id="MF_01400">
    <property type="entry name" value="MsrB"/>
    <property type="match status" value="1"/>
</dbReference>
<dbReference type="InterPro" id="IPR028427">
    <property type="entry name" value="Met_Sox_Rdtase_MsrB"/>
</dbReference>
<dbReference type="InterPro" id="IPR002579">
    <property type="entry name" value="Met_Sox_Rdtase_MsrB_dom"/>
</dbReference>
<dbReference type="InterPro" id="IPR011057">
    <property type="entry name" value="Mss4-like_sf"/>
</dbReference>
<dbReference type="NCBIfam" id="TIGR00357">
    <property type="entry name" value="peptide-methionine (R)-S-oxide reductase MsrB"/>
    <property type="match status" value="1"/>
</dbReference>
<dbReference type="PANTHER" id="PTHR10173">
    <property type="entry name" value="METHIONINE SULFOXIDE REDUCTASE"/>
    <property type="match status" value="1"/>
</dbReference>
<dbReference type="PANTHER" id="PTHR10173:SF52">
    <property type="entry name" value="METHIONINE-R-SULFOXIDE REDUCTASE B1"/>
    <property type="match status" value="1"/>
</dbReference>
<dbReference type="Pfam" id="PF01641">
    <property type="entry name" value="SelR"/>
    <property type="match status" value="1"/>
</dbReference>
<dbReference type="SUPFAM" id="SSF51316">
    <property type="entry name" value="Mss4-like"/>
    <property type="match status" value="1"/>
</dbReference>
<dbReference type="PROSITE" id="PS51790">
    <property type="entry name" value="MSRB"/>
    <property type="match status" value="1"/>
</dbReference>
<accession>C4ZZD4</accession>
<reference key="1">
    <citation type="journal article" date="2009" name="J. Bacteriol.">
        <title>Genomic sequencing reveals regulatory mutations and recombinational events in the widely used MC4100 lineage of Escherichia coli K-12.</title>
        <authorList>
            <person name="Ferenci T."/>
            <person name="Zhou Z."/>
            <person name="Betteridge T."/>
            <person name="Ren Y."/>
            <person name="Liu Y."/>
            <person name="Feng L."/>
            <person name="Reeves P.R."/>
            <person name="Wang L."/>
        </authorList>
    </citation>
    <scope>NUCLEOTIDE SEQUENCE [LARGE SCALE GENOMIC DNA]</scope>
    <source>
        <strain>K12 / MC4100 / BW2952</strain>
    </source>
</reference>
<name>MSRB_ECOBW</name>